<protein>
    <recommendedName>
        <fullName evidence="1">High frequency lysogenization protein HflD homolog</fullName>
    </recommendedName>
</protein>
<keyword id="KW-0997">Cell inner membrane</keyword>
<keyword id="KW-1003">Cell membrane</keyword>
<keyword id="KW-0963">Cytoplasm</keyword>
<keyword id="KW-0472">Membrane</keyword>
<proteinExistence type="inferred from homology"/>
<feature type="chain" id="PRO_1000212629" description="High frequency lysogenization protein HflD homolog">
    <location>
        <begin position="1"/>
        <end position="207"/>
    </location>
</feature>
<dbReference type="EMBL" id="AM181176">
    <property type="protein sequence ID" value="CAY50125.1"/>
    <property type="molecule type" value="Genomic_DNA"/>
</dbReference>
<dbReference type="RefSeq" id="WP_012724946.1">
    <property type="nucleotide sequence ID" value="NC_012660.1"/>
</dbReference>
<dbReference type="SMR" id="C3JY69"/>
<dbReference type="STRING" id="294.SRM1_03439"/>
<dbReference type="GeneID" id="93465161"/>
<dbReference type="eggNOG" id="COG2915">
    <property type="taxonomic scope" value="Bacteria"/>
</dbReference>
<dbReference type="HOGENOM" id="CLU_098920_0_0_6"/>
<dbReference type="OrthoDB" id="9788031at2"/>
<dbReference type="GO" id="GO:0005737">
    <property type="term" value="C:cytoplasm"/>
    <property type="evidence" value="ECO:0007669"/>
    <property type="project" value="UniProtKB-SubCell"/>
</dbReference>
<dbReference type="GO" id="GO:0005886">
    <property type="term" value="C:plasma membrane"/>
    <property type="evidence" value="ECO:0007669"/>
    <property type="project" value="UniProtKB-SubCell"/>
</dbReference>
<dbReference type="Gene3D" id="1.10.3890.10">
    <property type="entry name" value="HflD-like"/>
    <property type="match status" value="1"/>
</dbReference>
<dbReference type="HAMAP" id="MF_00695">
    <property type="entry name" value="HflD_protein"/>
    <property type="match status" value="1"/>
</dbReference>
<dbReference type="InterPro" id="IPR007451">
    <property type="entry name" value="HflD"/>
</dbReference>
<dbReference type="InterPro" id="IPR035932">
    <property type="entry name" value="HflD-like_sf"/>
</dbReference>
<dbReference type="NCBIfam" id="NF001246">
    <property type="entry name" value="PRK00218.1-2"/>
    <property type="match status" value="1"/>
</dbReference>
<dbReference type="NCBIfam" id="NF001247">
    <property type="entry name" value="PRK00218.1-3"/>
    <property type="match status" value="1"/>
</dbReference>
<dbReference type="PANTHER" id="PTHR38100">
    <property type="entry name" value="HIGH FREQUENCY LYSOGENIZATION PROTEIN HFLD"/>
    <property type="match status" value="1"/>
</dbReference>
<dbReference type="PANTHER" id="PTHR38100:SF1">
    <property type="entry name" value="HIGH FREQUENCY LYSOGENIZATION PROTEIN HFLD"/>
    <property type="match status" value="1"/>
</dbReference>
<dbReference type="Pfam" id="PF04356">
    <property type="entry name" value="DUF489"/>
    <property type="match status" value="1"/>
</dbReference>
<dbReference type="SUPFAM" id="SSF101322">
    <property type="entry name" value="YcfC-like"/>
    <property type="match status" value="1"/>
</dbReference>
<reference key="1">
    <citation type="journal article" date="2009" name="Genome Biol.">
        <title>Genomic and genetic analyses of diversity and plant interactions of Pseudomonas fluorescens.</title>
        <authorList>
            <person name="Silby M.W."/>
            <person name="Cerdeno-Tarraga A.M."/>
            <person name="Vernikos G.S."/>
            <person name="Giddens S.R."/>
            <person name="Jackson R.W."/>
            <person name="Preston G.M."/>
            <person name="Zhang X.-X."/>
            <person name="Moon C.D."/>
            <person name="Gehrig S.M."/>
            <person name="Godfrey S.A.C."/>
            <person name="Knight C.G."/>
            <person name="Malone J.G."/>
            <person name="Robinson Z."/>
            <person name="Spiers A.J."/>
            <person name="Harris S."/>
            <person name="Challis G.L."/>
            <person name="Yaxley A.M."/>
            <person name="Harris D."/>
            <person name="Seeger K."/>
            <person name="Murphy L."/>
            <person name="Rutter S."/>
            <person name="Squares R."/>
            <person name="Quail M.A."/>
            <person name="Saunders E."/>
            <person name="Mavromatis K."/>
            <person name="Brettin T.S."/>
            <person name="Bentley S.D."/>
            <person name="Hothersall J."/>
            <person name="Stephens E."/>
            <person name="Thomas C.M."/>
            <person name="Parkhill J."/>
            <person name="Levy S.B."/>
            <person name="Rainey P.B."/>
            <person name="Thomson N.R."/>
        </authorList>
    </citation>
    <scope>NUCLEOTIDE SEQUENCE [LARGE SCALE GENOMIC DNA]</scope>
    <source>
        <strain>SBW25</strain>
    </source>
</reference>
<organism>
    <name type="scientific">Pseudomonas fluorescens (strain SBW25)</name>
    <dbReference type="NCBI Taxonomy" id="216595"/>
    <lineage>
        <taxon>Bacteria</taxon>
        <taxon>Pseudomonadati</taxon>
        <taxon>Pseudomonadota</taxon>
        <taxon>Gammaproteobacteria</taxon>
        <taxon>Pseudomonadales</taxon>
        <taxon>Pseudomonadaceae</taxon>
        <taxon>Pseudomonas</taxon>
    </lineage>
</organism>
<name>HFLD_PSEFS</name>
<gene>
    <name evidence="1" type="primary">hflD</name>
    <name type="ordered locus">PFLU_3812</name>
</gene>
<comment type="subcellular location">
    <subcellularLocation>
        <location>Cytoplasm</location>
    </subcellularLocation>
    <subcellularLocation>
        <location evidence="1">Cell inner membrane</location>
        <topology evidence="1">Peripheral membrane protein</topology>
        <orientation evidence="1">Cytoplasmic side</orientation>
    </subcellularLocation>
</comment>
<comment type="similarity">
    <text evidence="1">Belongs to the HflD family.</text>
</comment>
<accession>C3JY69</accession>
<evidence type="ECO:0000255" key="1">
    <source>
        <dbReference type="HAMAP-Rule" id="MF_00695"/>
    </source>
</evidence>
<sequence length="207" mass="23188">MSPTQEQLTALGGVFLAAVLVDKIAKTGQVTEAGLTCMLGSLLIRDPKDTLEVYGGDDLALREGYRALIGALERDPSTLQREPLRYALSMLGLERQLAKREDMLEVIGKRLPQIQSQVEHFGPAHENVVAACGALYQDTLSTLRQRIQVHGDMRNLQQPNNASKIRALLLAGIRSARLWRQLGGHRWQLVISRRKLLKELYPLMRNE</sequence>